<evidence type="ECO:0000255" key="1">
    <source>
        <dbReference type="HAMAP-Rule" id="MF_00373"/>
    </source>
</evidence>
<evidence type="ECO:0000305" key="2"/>
<feature type="chain" id="PRO_0000178473" description="Large ribosomal subunit protein bL28">
    <location>
        <begin position="1"/>
        <end position="78"/>
    </location>
</feature>
<comment type="similarity">
    <text evidence="1">Belongs to the bacterial ribosomal protein bL28 family.</text>
</comment>
<sequence length="78" mass="8939">MSKVCIVTGKRPATGNNVSHAQNKTKRRFLPNLHAHRFWVESENRYIKLRVSSKGMRIIDKKGIDTVLSDLRAQGHKI</sequence>
<protein>
    <recommendedName>
        <fullName evidence="1">Large ribosomal subunit protein bL28</fullName>
    </recommendedName>
    <alternativeName>
        <fullName evidence="2">50S ribosomal protein L28</fullName>
    </alternativeName>
</protein>
<dbReference type="EMBL" id="AJ749949">
    <property type="protein sequence ID" value="CAG46236.1"/>
    <property type="molecule type" value="Genomic_DNA"/>
</dbReference>
<dbReference type="RefSeq" id="WP_003014822.1">
    <property type="nucleotide sequence ID" value="NZ_CP010290.1"/>
</dbReference>
<dbReference type="RefSeq" id="YP_170519.1">
    <property type="nucleotide sequence ID" value="NC_006570.2"/>
</dbReference>
<dbReference type="SMR" id="Q5NEM3"/>
<dbReference type="STRING" id="177416.FTT_1603"/>
<dbReference type="DNASU" id="3191994"/>
<dbReference type="EnsemblBacteria" id="CAG46236">
    <property type="protein sequence ID" value="CAG46236"/>
    <property type="gene ID" value="FTT_1603"/>
</dbReference>
<dbReference type="GeneID" id="75264165"/>
<dbReference type="KEGG" id="ftu:FTT_1603"/>
<dbReference type="eggNOG" id="COG0227">
    <property type="taxonomic scope" value="Bacteria"/>
</dbReference>
<dbReference type="OrthoDB" id="9805609at2"/>
<dbReference type="Proteomes" id="UP000001174">
    <property type="component" value="Chromosome"/>
</dbReference>
<dbReference type="GO" id="GO:0022625">
    <property type="term" value="C:cytosolic large ribosomal subunit"/>
    <property type="evidence" value="ECO:0007669"/>
    <property type="project" value="TreeGrafter"/>
</dbReference>
<dbReference type="GO" id="GO:0003735">
    <property type="term" value="F:structural constituent of ribosome"/>
    <property type="evidence" value="ECO:0007669"/>
    <property type="project" value="InterPro"/>
</dbReference>
<dbReference type="GO" id="GO:0006412">
    <property type="term" value="P:translation"/>
    <property type="evidence" value="ECO:0007669"/>
    <property type="project" value="UniProtKB-UniRule"/>
</dbReference>
<dbReference type="FunFam" id="2.30.170.40:FF:000001">
    <property type="entry name" value="50S ribosomal protein L28"/>
    <property type="match status" value="1"/>
</dbReference>
<dbReference type="Gene3D" id="2.30.170.40">
    <property type="entry name" value="Ribosomal protein L28/L24"/>
    <property type="match status" value="1"/>
</dbReference>
<dbReference type="HAMAP" id="MF_00373">
    <property type="entry name" value="Ribosomal_bL28"/>
    <property type="match status" value="1"/>
</dbReference>
<dbReference type="InterPro" id="IPR026569">
    <property type="entry name" value="Ribosomal_bL28"/>
</dbReference>
<dbReference type="InterPro" id="IPR034704">
    <property type="entry name" value="Ribosomal_bL28/bL31-like_sf"/>
</dbReference>
<dbReference type="InterPro" id="IPR001383">
    <property type="entry name" value="Ribosomal_bL28_bact-type"/>
</dbReference>
<dbReference type="InterPro" id="IPR037147">
    <property type="entry name" value="Ribosomal_bL28_sf"/>
</dbReference>
<dbReference type="NCBIfam" id="TIGR00009">
    <property type="entry name" value="L28"/>
    <property type="match status" value="1"/>
</dbReference>
<dbReference type="PANTHER" id="PTHR13528">
    <property type="entry name" value="39S RIBOSOMAL PROTEIN L28, MITOCHONDRIAL"/>
    <property type="match status" value="1"/>
</dbReference>
<dbReference type="PANTHER" id="PTHR13528:SF2">
    <property type="entry name" value="LARGE RIBOSOMAL SUBUNIT PROTEIN BL28M"/>
    <property type="match status" value="1"/>
</dbReference>
<dbReference type="Pfam" id="PF00830">
    <property type="entry name" value="Ribosomal_L28"/>
    <property type="match status" value="1"/>
</dbReference>
<dbReference type="SUPFAM" id="SSF143800">
    <property type="entry name" value="L28p-like"/>
    <property type="match status" value="1"/>
</dbReference>
<accession>Q5NEM3</accession>
<organism>
    <name type="scientific">Francisella tularensis subsp. tularensis (strain SCHU S4 / Schu 4)</name>
    <dbReference type="NCBI Taxonomy" id="177416"/>
    <lineage>
        <taxon>Bacteria</taxon>
        <taxon>Pseudomonadati</taxon>
        <taxon>Pseudomonadota</taxon>
        <taxon>Gammaproteobacteria</taxon>
        <taxon>Thiotrichales</taxon>
        <taxon>Francisellaceae</taxon>
        <taxon>Francisella</taxon>
    </lineage>
</organism>
<reference key="1">
    <citation type="journal article" date="2005" name="Nat. Genet.">
        <title>The complete genome sequence of Francisella tularensis, the causative agent of tularemia.</title>
        <authorList>
            <person name="Larsson P."/>
            <person name="Oyston P.C.F."/>
            <person name="Chain P."/>
            <person name="Chu M.C."/>
            <person name="Duffield M."/>
            <person name="Fuxelius H.-H."/>
            <person name="Garcia E."/>
            <person name="Haelltorp G."/>
            <person name="Johansson D."/>
            <person name="Isherwood K.E."/>
            <person name="Karp P.D."/>
            <person name="Larsson E."/>
            <person name="Liu Y."/>
            <person name="Michell S."/>
            <person name="Prior J."/>
            <person name="Prior R."/>
            <person name="Malfatti S."/>
            <person name="Sjoestedt A."/>
            <person name="Svensson K."/>
            <person name="Thompson N."/>
            <person name="Vergez L."/>
            <person name="Wagg J.K."/>
            <person name="Wren B.W."/>
            <person name="Lindler L.E."/>
            <person name="Andersson S.G.E."/>
            <person name="Forsman M."/>
            <person name="Titball R.W."/>
        </authorList>
    </citation>
    <scope>NUCLEOTIDE SEQUENCE [LARGE SCALE GENOMIC DNA]</scope>
    <source>
        <strain>SCHU S4 / Schu 4</strain>
    </source>
</reference>
<name>RL28_FRATT</name>
<proteinExistence type="inferred from homology"/>
<keyword id="KW-1185">Reference proteome</keyword>
<keyword id="KW-0687">Ribonucleoprotein</keyword>
<keyword id="KW-0689">Ribosomal protein</keyword>
<gene>
    <name evidence="1" type="primary">rpmB</name>
    <name type="ordered locus">FTT_1603</name>
</gene>